<evidence type="ECO:0000255" key="1"/>
<evidence type="ECO:0000305" key="2"/>
<sequence>MSKLVVFLFCIQVCFIQNVYSQCLGRVGPGGPPLGPYGGPLGGPGYGPVGYGGCGGYGGSGIGNVAVAGELPVAGSTGVTGQVPVIGAVEFAGPACAVGSVSISGACGPTCGCGGSPFY</sequence>
<gene>
    <name type="primary">ERA.2</name>
</gene>
<proteinExistence type="inferred from homology"/>
<protein>
    <recommendedName>
        <fullName>Chorion class CA protein ERA.2</fullName>
    </recommendedName>
</protein>
<feature type="signal peptide" evidence="1">
    <location>
        <begin position="1"/>
        <end position="21"/>
    </location>
</feature>
<feature type="chain" id="PRO_0000005377" description="Chorion class CA protein ERA.2">
    <location>
        <begin position="22"/>
        <end position="119"/>
    </location>
</feature>
<feature type="region of interest" description="Left arm">
    <location>
        <begin position="22"/>
        <end position="55"/>
    </location>
</feature>
<feature type="region of interest" description="Central domain">
    <location>
        <begin position="56"/>
        <end position="103"/>
    </location>
</feature>
<feature type="region of interest" description="Right arm">
    <location>
        <begin position="104"/>
        <end position="119"/>
    </location>
</feature>
<comment type="function">
    <text>This protein is one of many from the eggshell of the silk moth.</text>
</comment>
<comment type="similarity">
    <text evidence="2">Belongs to the chorion protein family.</text>
</comment>
<reference key="1">
    <citation type="journal article" date="1991" name="Genetics">
        <title>Sequence identity in an early chorion multigene family is the result of localized gene conversion.</title>
        <authorList>
            <person name="Hibner B.L."/>
            <person name="Burke W.D."/>
            <person name="Eickbush T.H."/>
        </authorList>
    </citation>
    <scope>NUCLEOTIDE SEQUENCE [GENOMIC DNA]</scope>
    <source>
        <strain>703</strain>
    </source>
</reference>
<organism>
    <name type="scientific">Bombyx mori</name>
    <name type="common">Silk moth</name>
    <dbReference type="NCBI Taxonomy" id="7091"/>
    <lineage>
        <taxon>Eukaryota</taxon>
        <taxon>Metazoa</taxon>
        <taxon>Ecdysozoa</taxon>
        <taxon>Arthropoda</taxon>
        <taxon>Hexapoda</taxon>
        <taxon>Insecta</taxon>
        <taxon>Pterygota</taxon>
        <taxon>Neoptera</taxon>
        <taxon>Endopterygota</taxon>
        <taxon>Lepidoptera</taxon>
        <taxon>Glossata</taxon>
        <taxon>Ditrysia</taxon>
        <taxon>Bombycoidea</taxon>
        <taxon>Bombycidae</taxon>
        <taxon>Bombycinae</taxon>
        <taxon>Bombyx</taxon>
    </lineage>
</organism>
<keyword id="KW-1185">Reference proteome</keyword>
<keyword id="KW-0677">Repeat</keyword>
<keyword id="KW-0732">Signal</keyword>
<dbReference type="EMBL" id="X58445">
    <property type="protein sequence ID" value="CAA41351.1"/>
    <property type="molecule type" value="Genomic_DNA"/>
</dbReference>
<dbReference type="PIR" id="S24291">
    <property type="entry name" value="S24291"/>
</dbReference>
<dbReference type="RefSeq" id="NP_001112377.1">
    <property type="nucleotide sequence ID" value="NM_001118905.1"/>
</dbReference>
<dbReference type="EnsemblMetazoa" id="NM_001118905.1">
    <property type="protein sequence ID" value="NP_001112377.1"/>
    <property type="gene ID" value="GeneID_100141508"/>
</dbReference>
<dbReference type="GeneID" id="100141508"/>
<dbReference type="KEGG" id="bmor:100141508"/>
<dbReference type="CTD" id="100141508"/>
<dbReference type="InParanoid" id="Q17212"/>
<dbReference type="OrthoDB" id="660270at7088"/>
<dbReference type="Proteomes" id="UP000005204">
    <property type="component" value="Unassembled WGS sequence"/>
</dbReference>
<dbReference type="GO" id="GO:0042600">
    <property type="term" value="C:egg chorion"/>
    <property type="evidence" value="ECO:0007669"/>
    <property type="project" value="InterPro"/>
</dbReference>
<dbReference type="GO" id="GO:0005213">
    <property type="term" value="F:structural constituent of egg chorion"/>
    <property type="evidence" value="ECO:0007669"/>
    <property type="project" value="InterPro"/>
</dbReference>
<dbReference type="GO" id="GO:0007304">
    <property type="term" value="P:chorion-containing eggshell formation"/>
    <property type="evidence" value="ECO:0007669"/>
    <property type="project" value="InterPro"/>
</dbReference>
<dbReference type="InterPro" id="IPR002635">
    <property type="entry name" value="Chorion"/>
</dbReference>
<dbReference type="Pfam" id="PF01723">
    <property type="entry name" value="Chorion_1"/>
    <property type="match status" value="2"/>
</dbReference>
<accession>Q17212</accession>
<name>CHCA2_BOMMO</name>